<name>Y1358_VIBVY</name>
<dbReference type="EMBL" id="BA000037">
    <property type="protein sequence ID" value="BAC94122.1"/>
    <property type="status" value="ALT_INIT"/>
    <property type="molecule type" value="Genomic_DNA"/>
</dbReference>
<dbReference type="RefSeq" id="WP_011150025.1">
    <property type="nucleotide sequence ID" value="NC_005139.1"/>
</dbReference>
<dbReference type="SMR" id="Q7MLR9"/>
<dbReference type="STRING" id="672.VV93_v1c12710"/>
<dbReference type="KEGG" id="vvy:VV1358"/>
<dbReference type="PATRIC" id="fig|196600.6.peg.1347"/>
<dbReference type="eggNOG" id="COG3012">
    <property type="taxonomic scope" value="Bacteria"/>
</dbReference>
<dbReference type="HOGENOM" id="CLU_099590_0_0_6"/>
<dbReference type="Proteomes" id="UP000002675">
    <property type="component" value="Chromosome I"/>
</dbReference>
<dbReference type="Gene3D" id="3.10.450.50">
    <property type="match status" value="1"/>
</dbReference>
<dbReference type="HAMAP" id="MF_00612">
    <property type="entry name" value="UPF0225"/>
    <property type="match status" value="1"/>
</dbReference>
<dbReference type="InterPro" id="IPR032710">
    <property type="entry name" value="NTF2-like_dom_sf"/>
</dbReference>
<dbReference type="InterPro" id="IPR004027">
    <property type="entry name" value="SEC_C_motif"/>
</dbReference>
<dbReference type="InterPro" id="IPR023006">
    <property type="entry name" value="UPF0225"/>
</dbReference>
<dbReference type="InterPro" id="IPR048469">
    <property type="entry name" value="YchJ-like_M"/>
</dbReference>
<dbReference type="NCBIfam" id="NF002449">
    <property type="entry name" value="PRK01617.1"/>
    <property type="match status" value="1"/>
</dbReference>
<dbReference type="NCBIfam" id="NF002592">
    <property type="entry name" value="PRK02250.1"/>
    <property type="match status" value="1"/>
</dbReference>
<dbReference type="PANTHER" id="PTHR33747:SF1">
    <property type="entry name" value="ADENYLATE CYCLASE-ASSOCIATED CAP C-TERMINAL DOMAIN-CONTAINING PROTEIN"/>
    <property type="match status" value="1"/>
</dbReference>
<dbReference type="PANTHER" id="PTHR33747">
    <property type="entry name" value="UPF0225 PROTEIN SCO1677"/>
    <property type="match status" value="1"/>
</dbReference>
<dbReference type="Pfam" id="PF02810">
    <property type="entry name" value="SEC-C"/>
    <property type="match status" value="2"/>
</dbReference>
<dbReference type="Pfam" id="PF17775">
    <property type="entry name" value="YchJ_M-like"/>
    <property type="match status" value="1"/>
</dbReference>
<dbReference type="SUPFAM" id="SSF54427">
    <property type="entry name" value="NTF2-like"/>
    <property type="match status" value="1"/>
</dbReference>
<dbReference type="SUPFAM" id="SSF103642">
    <property type="entry name" value="Sec-C motif"/>
    <property type="match status" value="1"/>
</dbReference>
<organism>
    <name type="scientific">Vibrio vulnificus (strain YJ016)</name>
    <dbReference type="NCBI Taxonomy" id="196600"/>
    <lineage>
        <taxon>Bacteria</taxon>
        <taxon>Pseudomonadati</taxon>
        <taxon>Pseudomonadota</taxon>
        <taxon>Gammaproteobacteria</taxon>
        <taxon>Vibrionales</taxon>
        <taxon>Vibrionaceae</taxon>
        <taxon>Vibrio</taxon>
    </lineage>
</organism>
<feature type="chain" id="PRO_0000071821" description="UPF0225 protein VV1358">
    <location>
        <begin position="1"/>
        <end position="167"/>
    </location>
</feature>
<gene>
    <name type="ordered locus">VV1358</name>
</gene>
<evidence type="ECO:0000255" key="1">
    <source>
        <dbReference type="HAMAP-Rule" id="MF_00612"/>
    </source>
</evidence>
<evidence type="ECO:0000305" key="2"/>
<comment type="similarity">
    <text evidence="1">Belongs to the UPF0225 family.</text>
</comment>
<comment type="sequence caution" evidence="2">
    <conflict type="erroneous initiation">
        <sequence resource="EMBL-CDS" id="BAC94122"/>
    </conflict>
</comment>
<protein>
    <recommendedName>
        <fullName evidence="1">UPF0225 protein VV1358</fullName>
    </recommendedName>
</protein>
<accession>Q7MLR9</accession>
<reference key="1">
    <citation type="journal article" date="2003" name="Genome Res.">
        <title>Comparative genome analysis of Vibrio vulnificus, a marine pathogen.</title>
        <authorList>
            <person name="Chen C.-Y."/>
            <person name="Wu K.-M."/>
            <person name="Chang Y.-C."/>
            <person name="Chang C.-H."/>
            <person name="Tsai H.-C."/>
            <person name="Liao T.-L."/>
            <person name="Liu Y.-M."/>
            <person name="Chen H.-J."/>
            <person name="Shen A.B.-T."/>
            <person name="Li J.-C."/>
            <person name="Su T.-L."/>
            <person name="Shao C.-P."/>
            <person name="Lee C.-T."/>
            <person name="Hor L.-I."/>
            <person name="Tsai S.-F."/>
        </authorList>
    </citation>
    <scope>NUCLEOTIDE SEQUENCE [LARGE SCALE GENOMIC DNA]</scope>
    <source>
        <strain>YJ016</strain>
    </source>
</reference>
<sequence>MAASCPCGSNRTYALCCEIAHKHHANVITPEQLMRSRYSAHVLGLVDYVVNTYHPSCHAEEQREGIAESIENDWCKLEVVKAEAGSNENEGFVEFNAYFDEDGKRYCMTERSRFVKEDGLWYYIDGTFPEEEPEQDPRLNQSVSSLKVGRNDPCICGSGKKFKKCCG</sequence>
<proteinExistence type="inferred from homology"/>